<gene>
    <name evidence="1" type="primary">ychJ</name>
    <name type="ordered locus">SSPA1042</name>
</gene>
<name>YCHJ_SALPK</name>
<accession>B5BI93</accession>
<organism>
    <name type="scientific">Salmonella paratyphi A (strain AKU_12601)</name>
    <dbReference type="NCBI Taxonomy" id="554290"/>
    <lineage>
        <taxon>Bacteria</taxon>
        <taxon>Pseudomonadati</taxon>
        <taxon>Pseudomonadota</taxon>
        <taxon>Gammaproteobacteria</taxon>
        <taxon>Enterobacterales</taxon>
        <taxon>Enterobacteriaceae</taxon>
        <taxon>Salmonella</taxon>
    </lineage>
</organism>
<reference key="1">
    <citation type="journal article" date="2009" name="BMC Genomics">
        <title>Pseudogene accumulation in the evolutionary histories of Salmonella enterica serovars Paratyphi A and Typhi.</title>
        <authorList>
            <person name="Holt K.E."/>
            <person name="Thomson N.R."/>
            <person name="Wain J."/>
            <person name="Langridge G.C."/>
            <person name="Hasan R."/>
            <person name="Bhutta Z.A."/>
            <person name="Quail M.A."/>
            <person name="Norbertczak H."/>
            <person name="Walker D."/>
            <person name="Simmonds M."/>
            <person name="White B."/>
            <person name="Bason N."/>
            <person name="Mungall K."/>
            <person name="Dougan G."/>
            <person name="Parkhill J."/>
        </authorList>
    </citation>
    <scope>NUCLEOTIDE SEQUENCE [LARGE SCALE GENOMIC DNA]</scope>
    <source>
        <strain>AKU_12601</strain>
    </source>
</reference>
<sequence>MSQPCPCGSADEYSLCCGRIVSGERVAPDPSHLMRSRYCAFVMKDADYLIKSWHPTCNAAAFRDDIIAGFANTRWLGLTIFEHTWSEAENTGYVSFIARFSEQGKTGAIIERSRFIKENGQWYYIDGTRPQLGRNDPCPCGSGKKFKKCCGQ</sequence>
<dbReference type="EMBL" id="FM200053">
    <property type="protein sequence ID" value="CAR59196.1"/>
    <property type="molecule type" value="Genomic_DNA"/>
</dbReference>
<dbReference type="RefSeq" id="WP_001540172.1">
    <property type="nucleotide sequence ID" value="NC_011147.1"/>
</dbReference>
<dbReference type="SMR" id="B5BI93"/>
<dbReference type="KEGG" id="sek:SSPA1042"/>
<dbReference type="HOGENOM" id="CLU_099590_0_0_6"/>
<dbReference type="Proteomes" id="UP000001869">
    <property type="component" value="Chromosome"/>
</dbReference>
<dbReference type="Gene3D" id="3.10.450.50">
    <property type="match status" value="1"/>
</dbReference>
<dbReference type="HAMAP" id="MF_00612">
    <property type="entry name" value="UPF0225"/>
    <property type="match status" value="1"/>
</dbReference>
<dbReference type="InterPro" id="IPR032710">
    <property type="entry name" value="NTF2-like_dom_sf"/>
</dbReference>
<dbReference type="InterPro" id="IPR004027">
    <property type="entry name" value="SEC_C_motif"/>
</dbReference>
<dbReference type="InterPro" id="IPR023006">
    <property type="entry name" value="UPF0225"/>
</dbReference>
<dbReference type="InterPro" id="IPR048469">
    <property type="entry name" value="YchJ-like_M"/>
</dbReference>
<dbReference type="NCBIfam" id="NF002449">
    <property type="entry name" value="PRK01617.1"/>
    <property type="match status" value="1"/>
</dbReference>
<dbReference type="NCBIfam" id="NF002486">
    <property type="entry name" value="PRK01752.1"/>
    <property type="match status" value="1"/>
</dbReference>
<dbReference type="PANTHER" id="PTHR33747:SF1">
    <property type="entry name" value="ADENYLATE CYCLASE-ASSOCIATED CAP C-TERMINAL DOMAIN-CONTAINING PROTEIN"/>
    <property type="match status" value="1"/>
</dbReference>
<dbReference type="PANTHER" id="PTHR33747">
    <property type="entry name" value="UPF0225 PROTEIN SCO1677"/>
    <property type="match status" value="1"/>
</dbReference>
<dbReference type="Pfam" id="PF02810">
    <property type="entry name" value="SEC-C"/>
    <property type="match status" value="2"/>
</dbReference>
<dbReference type="Pfam" id="PF17775">
    <property type="entry name" value="YchJ_M-like"/>
    <property type="match status" value="1"/>
</dbReference>
<dbReference type="SUPFAM" id="SSF54427">
    <property type="entry name" value="NTF2-like"/>
    <property type="match status" value="1"/>
</dbReference>
<dbReference type="SUPFAM" id="SSF103642">
    <property type="entry name" value="Sec-C motif"/>
    <property type="match status" value="1"/>
</dbReference>
<evidence type="ECO:0000255" key="1">
    <source>
        <dbReference type="HAMAP-Rule" id="MF_00612"/>
    </source>
</evidence>
<feature type="chain" id="PRO_1000130394" description="UPF0225 protein YchJ">
    <location>
        <begin position="1"/>
        <end position="152"/>
    </location>
</feature>
<comment type="similarity">
    <text evidence="1">Belongs to the UPF0225 family.</text>
</comment>
<protein>
    <recommendedName>
        <fullName evidence="1">UPF0225 protein YchJ</fullName>
    </recommendedName>
</protein>
<proteinExistence type="inferred from homology"/>